<accession>Q1C824</accession>
<comment type="function">
    <text evidence="1">Catalyzes carboxymethyl transfer from carboxy-S-adenosyl-L-methionine (Cx-SAM) to 5-hydroxyuridine (ho5U) to form 5-carboxymethoxyuridine (cmo5U) at position 34 in tRNAs.</text>
</comment>
<comment type="catalytic activity">
    <reaction evidence="1">
        <text>carboxy-S-adenosyl-L-methionine + 5-hydroxyuridine(34) in tRNA = 5-carboxymethoxyuridine(34) in tRNA + S-adenosyl-L-homocysteine + H(+)</text>
        <dbReference type="Rhea" id="RHEA:52848"/>
        <dbReference type="Rhea" id="RHEA-COMP:13381"/>
        <dbReference type="Rhea" id="RHEA-COMP:13383"/>
        <dbReference type="ChEBI" id="CHEBI:15378"/>
        <dbReference type="ChEBI" id="CHEBI:57856"/>
        <dbReference type="ChEBI" id="CHEBI:134278"/>
        <dbReference type="ChEBI" id="CHEBI:136877"/>
        <dbReference type="ChEBI" id="CHEBI:136879"/>
    </reaction>
</comment>
<comment type="subunit">
    <text evidence="1">Homotetramer.</text>
</comment>
<comment type="similarity">
    <text evidence="1">Belongs to the class I-like SAM-binding methyltransferase superfamily. CmoB family.</text>
</comment>
<name>CMOB_YERPA</name>
<organism>
    <name type="scientific">Yersinia pestis bv. Antiqua (strain Antiqua)</name>
    <dbReference type="NCBI Taxonomy" id="360102"/>
    <lineage>
        <taxon>Bacteria</taxon>
        <taxon>Pseudomonadati</taxon>
        <taxon>Pseudomonadota</taxon>
        <taxon>Gammaproteobacteria</taxon>
        <taxon>Enterobacterales</taxon>
        <taxon>Yersiniaceae</taxon>
        <taxon>Yersinia</taxon>
    </lineage>
</organism>
<dbReference type="EC" id="2.5.1.-" evidence="1"/>
<dbReference type="EMBL" id="CP000308">
    <property type="protein sequence ID" value="ABG13398.1"/>
    <property type="molecule type" value="Genomic_DNA"/>
</dbReference>
<dbReference type="RefSeq" id="WP_002211208.1">
    <property type="nucleotide sequence ID" value="NZ_CP009906.1"/>
</dbReference>
<dbReference type="SMR" id="Q1C824"/>
<dbReference type="GeneID" id="57976612"/>
<dbReference type="KEGG" id="ypa:YPA_1431"/>
<dbReference type="Proteomes" id="UP000001971">
    <property type="component" value="Chromosome"/>
</dbReference>
<dbReference type="GO" id="GO:0008168">
    <property type="term" value="F:methyltransferase activity"/>
    <property type="evidence" value="ECO:0007669"/>
    <property type="project" value="TreeGrafter"/>
</dbReference>
<dbReference type="GO" id="GO:0016765">
    <property type="term" value="F:transferase activity, transferring alkyl or aryl (other than methyl) groups"/>
    <property type="evidence" value="ECO:0007669"/>
    <property type="project" value="UniProtKB-UniRule"/>
</dbReference>
<dbReference type="GO" id="GO:0002098">
    <property type="term" value="P:tRNA wobble uridine modification"/>
    <property type="evidence" value="ECO:0007669"/>
    <property type="project" value="InterPro"/>
</dbReference>
<dbReference type="CDD" id="cd02440">
    <property type="entry name" value="AdoMet_MTases"/>
    <property type="match status" value="1"/>
</dbReference>
<dbReference type="Gene3D" id="3.40.50.150">
    <property type="entry name" value="Vaccinia Virus protein VP39"/>
    <property type="match status" value="1"/>
</dbReference>
<dbReference type="HAMAP" id="MF_01590">
    <property type="entry name" value="tRNA_carboxymethyltr_CmoB"/>
    <property type="match status" value="1"/>
</dbReference>
<dbReference type="InterPro" id="IPR010017">
    <property type="entry name" value="CmoB"/>
</dbReference>
<dbReference type="InterPro" id="IPR027555">
    <property type="entry name" value="Mo5U34_MeTrfas-like"/>
</dbReference>
<dbReference type="InterPro" id="IPR029063">
    <property type="entry name" value="SAM-dependent_MTases_sf"/>
</dbReference>
<dbReference type="NCBIfam" id="NF011650">
    <property type="entry name" value="PRK15068.1"/>
    <property type="match status" value="1"/>
</dbReference>
<dbReference type="NCBIfam" id="TIGR00452">
    <property type="entry name" value="tRNA 5-methoxyuridine(34)/uridine 5-oxyacetic acid(34) synthase CmoB"/>
    <property type="match status" value="1"/>
</dbReference>
<dbReference type="PANTHER" id="PTHR43464">
    <property type="entry name" value="METHYLTRANSFERASE"/>
    <property type="match status" value="1"/>
</dbReference>
<dbReference type="PANTHER" id="PTHR43464:SF95">
    <property type="entry name" value="TRNA U34 CARBOXYMETHYLTRANSFERASE"/>
    <property type="match status" value="1"/>
</dbReference>
<dbReference type="Pfam" id="PF08003">
    <property type="entry name" value="Methyltransf_9"/>
    <property type="match status" value="1"/>
</dbReference>
<dbReference type="SUPFAM" id="SSF53335">
    <property type="entry name" value="S-adenosyl-L-methionine-dependent methyltransferases"/>
    <property type="match status" value="1"/>
</dbReference>
<reference key="1">
    <citation type="journal article" date="2006" name="J. Bacteriol.">
        <title>Complete genome sequence of Yersinia pestis strains Antiqua and Nepal516: evidence of gene reduction in an emerging pathogen.</title>
        <authorList>
            <person name="Chain P.S.G."/>
            <person name="Hu P."/>
            <person name="Malfatti S.A."/>
            <person name="Radnedge L."/>
            <person name="Larimer F."/>
            <person name="Vergez L.M."/>
            <person name="Worsham P."/>
            <person name="Chu M.C."/>
            <person name="Andersen G.L."/>
        </authorList>
    </citation>
    <scope>NUCLEOTIDE SEQUENCE [LARGE SCALE GENOMIC DNA]</scope>
    <source>
        <strain>Antiqua</strain>
    </source>
</reference>
<proteinExistence type="inferred from homology"/>
<sequence>MIEFGDFYRLIAKGPLSPWLDTLPAQLSAWQRESLHGKFKTWFNAVEHLPQLTPTTLDLHSGVRAEMSPPISAGQREGMENMLRALMPWRKGPFSLYGLDIDTEWRSDWKWQRVLPHISPLAGRTILDVGCGSGYHLWRMIGEGAHLAVGIDPMQLFLCQFEAIRKLLGGDQRAHVLPLGIEQLPELAAFDTVFSMGVLYHRRSPLDHLYQLKNQLVTDGELVLETLVVEGDSQQVLVPGDRYAQMRNVYFIPSAPALKAWLEKCGFVDVRIADMAVTTTEEQRRTDWMTSESLAEFLDPHDHSKTVEGYPAPLRAVLIARKP</sequence>
<evidence type="ECO:0000255" key="1">
    <source>
        <dbReference type="HAMAP-Rule" id="MF_01590"/>
    </source>
</evidence>
<keyword id="KW-0808">Transferase</keyword>
<keyword id="KW-0819">tRNA processing</keyword>
<protein>
    <recommendedName>
        <fullName evidence="1">tRNA U34 carboxymethyltransferase</fullName>
        <ecNumber evidence="1">2.5.1.-</ecNumber>
    </recommendedName>
</protein>
<feature type="chain" id="PRO_0000313994" description="tRNA U34 carboxymethyltransferase">
    <location>
        <begin position="1"/>
        <end position="323"/>
    </location>
</feature>
<feature type="binding site" evidence="1">
    <location>
        <position position="91"/>
    </location>
    <ligand>
        <name>carboxy-S-adenosyl-L-methionine</name>
        <dbReference type="ChEBI" id="CHEBI:134278"/>
    </ligand>
</feature>
<feature type="binding site" evidence="1">
    <location>
        <position position="105"/>
    </location>
    <ligand>
        <name>carboxy-S-adenosyl-L-methionine</name>
        <dbReference type="ChEBI" id="CHEBI:134278"/>
    </ligand>
</feature>
<feature type="binding site" evidence="1">
    <location>
        <position position="110"/>
    </location>
    <ligand>
        <name>carboxy-S-adenosyl-L-methionine</name>
        <dbReference type="ChEBI" id="CHEBI:134278"/>
    </ligand>
</feature>
<feature type="binding site" evidence="1">
    <location>
        <position position="130"/>
    </location>
    <ligand>
        <name>carboxy-S-adenosyl-L-methionine</name>
        <dbReference type="ChEBI" id="CHEBI:134278"/>
    </ligand>
</feature>
<feature type="binding site" evidence="1">
    <location>
        <begin position="181"/>
        <end position="182"/>
    </location>
    <ligand>
        <name>carboxy-S-adenosyl-L-methionine</name>
        <dbReference type="ChEBI" id="CHEBI:134278"/>
    </ligand>
</feature>
<feature type="binding site" evidence="1">
    <location>
        <position position="196"/>
    </location>
    <ligand>
        <name>carboxy-S-adenosyl-L-methionine</name>
        <dbReference type="ChEBI" id="CHEBI:134278"/>
    </ligand>
</feature>
<feature type="binding site" evidence="1">
    <location>
        <position position="200"/>
    </location>
    <ligand>
        <name>carboxy-S-adenosyl-L-methionine</name>
        <dbReference type="ChEBI" id="CHEBI:134278"/>
    </ligand>
</feature>
<feature type="binding site" evidence="1">
    <location>
        <position position="315"/>
    </location>
    <ligand>
        <name>carboxy-S-adenosyl-L-methionine</name>
        <dbReference type="ChEBI" id="CHEBI:134278"/>
    </ligand>
</feature>
<gene>
    <name evidence="1" type="primary">cmoB</name>
    <name type="ordered locus">YPA_1431</name>
</gene>